<protein>
    <recommendedName>
        <fullName evidence="7">Probable serine/threonine-protein kinase PBL12</fullName>
        <ecNumber evidence="7">2.7.11.1</ecNumber>
    </recommendedName>
    <alternativeName>
        <fullName evidence="5">PBS1-like protein 12</fullName>
    </alternativeName>
    <alternativeName>
        <fullName evidence="7">Root-specific kinase 1</fullName>
    </alternativeName>
</protein>
<name>PBL12_ARATH</name>
<evidence type="ECO:0000250" key="1">
    <source>
        <dbReference type="UniProtKB" id="O48814"/>
    </source>
</evidence>
<evidence type="ECO:0000250" key="2">
    <source>
        <dbReference type="UniProtKB" id="Q9ZUF4"/>
    </source>
</evidence>
<evidence type="ECO:0000255" key="3">
    <source>
        <dbReference type="PROSITE-ProRule" id="PRU00159"/>
    </source>
</evidence>
<evidence type="ECO:0000269" key="4">
    <source>
    </source>
</evidence>
<evidence type="ECO:0000303" key="5">
    <source>
    </source>
</evidence>
<evidence type="ECO:0000303" key="6">
    <source>
    </source>
</evidence>
<evidence type="ECO:0000305" key="7"/>
<evidence type="ECO:0000305" key="8">
    <source>
    </source>
</evidence>
<evidence type="ECO:0000312" key="9">
    <source>
        <dbReference type="Araport" id="AT2G26290"/>
    </source>
</evidence>
<keyword id="KW-0067">ATP-binding</keyword>
<keyword id="KW-1003">Cell membrane</keyword>
<keyword id="KW-0418">Kinase</keyword>
<keyword id="KW-0472">Membrane</keyword>
<keyword id="KW-0547">Nucleotide-binding</keyword>
<keyword id="KW-0611">Plant defense</keyword>
<keyword id="KW-1185">Reference proteome</keyword>
<keyword id="KW-0723">Serine/threonine-protein kinase</keyword>
<keyword id="KW-0346">Stress response</keyword>
<keyword id="KW-0808">Transferase</keyword>
<gene>
    <name evidence="5" type="primary">PBL12</name>
    <name evidence="6" type="synonym">ARSK1</name>
    <name evidence="9" type="ordered locus">At2g26290</name>
</gene>
<sequence>MAVFKKKKTSLTSLFLGCYKAKNASKYEGGEKAVMKIRTCPAFKRLSLSDISDPSSPMSVMDDLSHSFTSQKLRLFTLSELRVITHNFSRSNMLGEGGFGPVYKGFIDDKVKPGIEAQPVAVKALDLHGHQGHREWLAEILFLGQLSNKHLVKLIGFCCEEEQRVLVYEYMPRGSLENQLFRRNSLAMAWGIRMKIALGAAKGLAFLHEAEKPVIYRDFKTSNILLDSDYNAKLSDFGLAKDGPEGEHTHVTTRVMGTQGYAAPEYIMTGHLTTMNDVYSFGVVLLELITGKRSMDNTRTRREQSLVEWARPMLRDQRKLERIIDPRLANQHKTEAAQVAASLAYKCLSQHPKYRPTMCEVVKVLESIQEVDIRKHDGNNNKEGKKFVDINKFRHHRKGKRRVNIAYSDSLVYKESKAKQNDGI</sequence>
<accession>O64842</accession>
<accession>Q39229</accession>
<accession>Q6NMK5</accession>
<feature type="chain" id="PRO_0000438607" description="Probable serine/threonine-protein kinase PBL12">
    <location>
        <begin position="1"/>
        <end position="424"/>
    </location>
</feature>
<feature type="domain" description="Protein kinase" evidence="3">
    <location>
        <begin position="88"/>
        <end position="368"/>
    </location>
</feature>
<feature type="active site" description="Proton acceptor" evidence="3">
    <location>
        <position position="218"/>
    </location>
</feature>
<feature type="binding site" evidence="3">
    <location>
        <begin position="94"/>
        <end position="102"/>
    </location>
    <ligand>
        <name>ATP</name>
        <dbReference type="ChEBI" id="CHEBI:30616"/>
    </ligand>
</feature>
<feature type="binding site" evidence="3">
    <location>
        <position position="123"/>
    </location>
    <ligand>
        <name>ATP</name>
        <dbReference type="ChEBI" id="CHEBI:30616"/>
    </ligand>
</feature>
<feature type="sequence conflict" description="In Ref. 1; AAA81538." evidence="7" ref="1">
    <original>W</original>
    <variation>YV</variation>
    <location>
        <position position="190"/>
    </location>
</feature>
<feature type="sequence conflict" description="In Ref. 1; AAA81538." evidence="7" ref="1">
    <original>A</original>
    <variation>R</variation>
    <location>
        <position position="262"/>
    </location>
</feature>
<reference key="1">
    <citation type="journal article" date="1995" name="Plant J.">
        <title>An Arabidopsis thaliana root-specific kinase homolog is induced by dehydration, ABA, and NaCl.</title>
        <authorList>
            <person name="Hwang I."/>
            <person name="Goodman H.M."/>
        </authorList>
    </citation>
    <scope>NUCLEOTIDE SEQUENCE [GENOMIC DNA]</scope>
    <scope>TISSUE SPECIFICITY</scope>
    <scope>INDUCTION</scope>
    <source>
        <strain>cv. Columbia</strain>
    </source>
</reference>
<reference key="2">
    <citation type="journal article" date="1999" name="Nature">
        <title>Sequence and analysis of chromosome 2 of the plant Arabidopsis thaliana.</title>
        <authorList>
            <person name="Lin X."/>
            <person name="Kaul S."/>
            <person name="Rounsley S.D."/>
            <person name="Shea T.P."/>
            <person name="Benito M.-I."/>
            <person name="Town C.D."/>
            <person name="Fujii C.Y."/>
            <person name="Mason T.M."/>
            <person name="Bowman C.L."/>
            <person name="Barnstead M.E."/>
            <person name="Feldblyum T.V."/>
            <person name="Buell C.R."/>
            <person name="Ketchum K.A."/>
            <person name="Lee J.J."/>
            <person name="Ronning C.M."/>
            <person name="Koo H.L."/>
            <person name="Moffat K.S."/>
            <person name="Cronin L.A."/>
            <person name="Shen M."/>
            <person name="Pai G."/>
            <person name="Van Aken S."/>
            <person name="Umayam L."/>
            <person name="Tallon L.J."/>
            <person name="Gill J.E."/>
            <person name="Adams M.D."/>
            <person name="Carrera A.J."/>
            <person name="Creasy T.H."/>
            <person name="Goodman H.M."/>
            <person name="Somerville C.R."/>
            <person name="Copenhaver G.P."/>
            <person name="Preuss D."/>
            <person name="Nierman W.C."/>
            <person name="White O."/>
            <person name="Eisen J.A."/>
            <person name="Salzberg S.L."/>
            <person name="Fraser C.M."/>
            <person name="Venter J.C."/>
        </authorList>
    </citation>
    <scope>NUCLEOTIDE SEQUENCE [LARGE SCALE GENOMIC DNA]</scope>
    <source>
        <strain>cv. Columbia</strain>
    </source>
</reference>
<reference key="3">
    <citation type="journal article" date="2017" name="Plant J.">
        <title>Araport11: a complete reannotation of the Arabidopsis thaliana reference genome.</title>
        <authorList>
            <person name="Cheng C.Y."/>
            <person name="Krishnakumar V."/>
            <person name="Chan A.P."/>
            <person name="Thibaud-Nissen F."/>
            <person name="Schobel S."/>
            <person name="Town C.D."/>
        </authorList>
    </citation>
    <scope>GENOME REANNOTATION</scope>
    <source>
        <strain>cv. Columbia</strain>
    </source>
</reference>
<reference key="4">
    <citation type="submission" date="2004-02" db="EMBL/GenBank/DDBJ databases">
        <title>Arabidopsis ORF clones.</title>
        <authorList>
            <person name="Kim C.J."/>
            <person name="Chen H."/>
            <person name="Cheuk R.F."/>
            <person name="Shinn P."/>
            <person name="Ecker J.R."/>
        </authorList>
    </citation>
    <scope>NUCLEOTIDE SEQUENCE [LARGE SCALE MRNA] OF 131-424 AND 171-424</scope>
    <source>
        <strain>cv. Columbia</strain>
    </source>
</reference>
<reference key="5">
    <citation type="journal article" date="2010" name="Cell Host Microbe">
        <title>Receptor-like cytoplasmic kinases integrate signaling from multiple plant immune receptors and are targeted by a Pseudomonas syringae effector.</title>
        <authorList>
            <person name="Zhang J."/>
            <person name="Li W."/>
            <person name="Xiang T."/>
            <person name="Liu Z."/>
            <person name="Laluk K."/>
            <person name="Ding X."/>
            <person name="Zou Y."/>
            <person name="Gao M."/>
            <person name="Zhang X."/>
            <person name="Chen S."/>
            <person name="Mengiste T."/>
            <person name="Zhang Y."/>
            <person name="Zhou J.M."/>
        </authorList>
    </citation>
    <scope>GENE FAMILY</scope>
    <scope>NOMENCLATURE</scope>
</reference>
<proteinExistence type="evidence at transcript level"/>
<comment type="function">
    <text evidence="1 8">May play a role in the signal transduction pathway of osmotic stress (Probable). May be involved in plant defense signaling (By similarity).</text>
</comment>
<comment type="catalytic activity">
    <reaction evidence="7">
        <text>L-seryl-[protein] + ATP = O-phospho-L-seryl-[protein] + ADP + H(+)</text>
        <dbReference type="Rhea" id="RHEA:17989"/>
        <dbReference type="Rhea" id="RHEA-COMP:9863"/>
        <dbReference type="Rhea" id="RHEA-COMP:11604"/>
        <dbReference type="ChEBI" id="CHEBI:15378"/>
        <dbReference type="ChEBI" id="CHEBI:29999"/>
        <dbReference type="ChEBI" id="CHEBI:30616"/>
        <dbReference type="ChEBI" id="CHEBI:83421"/>
        <dbReference type="ChEBI" id="CHEBI:456216"/>
        <dbReference type="EC" id="2.7.11.1"/>
    </reaction>
</comment>
<comment type="catalytic activity">
    <reaction evidence="7">
        <text>L-threonyl-[protein] + ATP = O-phospho-L-threonyl-[protein] + ADP + H(+)</text>
        <dbReference type="Rhea" id="RHEA:46608"/>
        <dbReference type="Rhea" id="RHEA-COMP:11060"/>
        <dbReference type="Rhea" id="RHEA-COMP:11605"/>
        <dbReference type="ChEBI" id="CHEBI:15378"/>
        <dbReference type="ChEBI" id="CHEBI:30013"/>
        <dbReference type="ChEBI" id="CHEBI:30616"/>
        <dbReference type="ChEBI" id="CHEBI:61977"/>
        <dbReference type="ChEBI" id="CHEBI:456216"/>
        <dbReference type="EC" id="2.7.11.1"/>
    </reaction>
</comment>
<comment type="subcellular location">
    <subcellularLocation>
        <location evidence="2">Cell membrane</location>
    </subcellularLocation>
</comment>
<comment type="tissue specificity">
    <text evidence="4">Expressed specifically in roots.</text>
</comment>
<comment type="induction">
    <text evidence="4">Induced in roots by exposure to air, abscisic acid (ABA) and salt treatment.</text>
</comment>
<comment type="similarity">
    <text evidence="3">Belongs to the protein kinase superfamily. Ser/Thr protein kinase family.</text>
</comment>
<comment type="sequence caution" evidence="7">
    <conflict type="frameshift">
        <sequence resource="EMBL-CDS" id="AAA81538"/>
    </conflict>
</comment>
<dbReference type="EC" id="2.7.11.1" evidence="7"/>
<dbReference type="EMBL" id="L22302">
    <property type="protein sequence ID" value="AAA81538.1"/>
    <property type="status" value="ALT_FRAME"/>
    <property type="molecule type" value="Genomic_DNA"/>
</dbReference>
<dbReference type="EMBL" id="AC004484">
    <property type="protein sequence ID" value="AAC14522.1"/>
    <property type="molecule type" value="Genomic_DNA"/>
</dbReference>
<dbReference type="EMBL" id="CP002685">
    <property type="protein sequence ID" value="AEC07819.1"/>
    <property type="molecule type" value="Genomic_DNA"/>
</dbReference>
<dbReference type="EMBL" id="BT010769">
    <property type="protein sequence ID" value="AAR23739.1"/>
    <property type="molecule type" value="mRNA"/>
</dbReference>
<dbReference type="EMBL" id="BT011654">
    <property type="protein sequence ID" value="AAS47660.1"/>
    <property type="molecule type" value="mRNA"/>
</dbReference>
<dbReference type="PIR" id="F84658">
    <property type="entry name" value="F84658"/>
</dbReference>
<dbReference type="RefSeq" id="NP_180197.1">
    <property type="nucleotide sequence ID" value="NM_128186.3"/>
</dbReference>
<dbReference type="SMR" id="O64842"/>
<dbReference type="FunCoup" id="O64842">
    <property type="interactions" value="2451"/>
</dbReference>
<dbReference type="IntAct" id="O64842">
    <property type="interactions" value="1"/>
</dbReference>
<dbReference type="STRING" id="3702.O64842"/>
<dbReference type="iPTMnet" id="O64842"/>
<dbReference type="PaxDb" id="3702-AT2G26290.1"/>
<dbReference type="ProteomicsDB" id="236283"/>
<dbReference type="EnsemblPlants" id="AT2G26290.1">
    <property type="protein sequence ID" value="AT2G26290.1"/>
    <property type="gene ID" value="AT2G26290"/>
</dbReference>
<dbReference type="GeneID" id="817169"/>
<dbReference type="Gramene" id="AT2G26290.1">
    <property type="protein sequence ID" value="AT2G26290.1"/>
    <property type="gene ID" value="AT2G26290"/>
</dbReference>
<dbReference type="KEGG" id="ath:AT2G26290"/>
<dbReference type="Araport" id="AT2G26290"/>
<dbReference type="TAIR" id="AT2G26290">
    <property type="gene designation" value="ARSK1"/>
</dbReference>
<dbReference type="eggNOG" id="KOG1187">
    <property type="taxonomic scope" value="Eukaryota"/>
</dbReference>
<dbReference type="HOGENOM" id="CLU_000288_21_2_1"/>
<dbReference type="InParanoid" id="O64842"/>
<dbReference type="OMA" id="NAESPCG"/>
<dbReference type="PhylomeDB" id="O64842"/>
<dbReference type="PRO" id="PR:O64842"/>
<dbReference type="Proteomes" id="UP000006548">
    <property type="component" value="Chromosome 2"/>
</dbReference>
<dbReference type="ExpressionAtlas" id="O64842">
    <property type="expression patterns" value="baseline and differential"/>
</dbReference>
<dbReference type="GO" id="GO:0005886">
    <property type="term" value="C:plasma membrane"/>
    <property type="evidence" value="ECO:0007669"/>
    <property type="project" value="UniProtKB-SubCell"/>
</dbReference>
<dbReference type="GO" id="GO:0005524">
    <property type="term" value="F:ATP binding"/>
    <property type="evidence" value="ECO:0007669"/>
    <property type="project" value="UniProtKB-KW"/>
</dbReference>
<dbReference type="GO" id="GO:0016301">
    <property type="term" value="F:kinase activity"/>
    <property type="evidence" value="ECO:0000250"/>
    <property type="project" value="TAIR"/>
</dbReference>
<dbReference type="GO" id="GO:0106310">
    <property type="term" value="F:protein serine kinase activity"/>
    <property type="evidence" value="ECO:0007669"/>
    <property type="project" value="RHEA"/>
</dbReference>
<dbReference type="GO" id="GO:0004674">
    <property type="term" value="F:protein serine/threonine kinase activity"/>
    <property type="evidence" value="ECO:0007669"/>
    <property type="project" value="UniProtKB-KW"/>
</dbReference>
<dbReference type="GO" id="GO:0006952">
    <property type="term" value="P:defense response"/>
    <property type="evidence" value="ECO:0007669"/>
    <property type="project" value="UniProtKB-KW"/>
</dbReference>
<dbReference type="FunFam" id="1.10.510.10:FF:000258">
    <property type="entry name" value="Probable serine/threonine-protein kinase PBL8"/>
    <property type="match status" value="1"/>
</dbReference>
<dbReference type="FunFam" id="3.30.200.20:FF:000228">
    <property type="entry name" value="Serine/threonine-protein kinase BIK1"/>
    <property type="match status" value="1"/>
</dbReference>
<dbReference type="Gene3D" id="3.30.200.20">
    <property type="entry name" value="Phosphorylase Kinase, domain 1"/>
    <property type="match status" value="1"/>
</dbReference>
<dbReference type="Gene3D" id="1.10.510.10">
    <property type="entry name" value="Transferase(Phosphotransferase) domain 1"/>
    <property type="match status" value="1"/>
</dbReference>
<dbReference type="InterPro" id="IPR011009">
    <property type="entry name" value="Kinase-like_dom_sf"/>
</dbReference>
<dbReference type="InterPro" id="IPR050823">
    <property type="entry name" value="Plant_Ser_Thr_Prot_Kinase"/>
</dbReference>
<dbReference type="InterPro" id="IPR000719">
    <property type="entry name" value="Prot_kinase_dom"/>
</dbReference>
<dbReference type="InterPro" id="IPR001245">
    <property type="entry name" value="Ser-Thr/Tyr_kinase_cat_dom"/>
</dbReference>
<dbReference type="InterPro" id="IPR008271">
    <property type="entry name" value="Ser/Thr_kinase_AS"/>
</dbReference>
<dbReference type="PANTHER" id="PTHR45621">
    <property type="entry name" value="OS01G0588500 PROTEIN-RELATED"/>
    <property type="match status" value="1"/>
</dbReference>
<dbReference type="Pfam" id="PF07714">
    <property type="entry name" value="PK_Tyr_Ser-Thr"/>
    <property type="match status" value="1"/>
</dbReference>
<dbReference type="SUPFAM" id="SSF56112">
    <property type="entry name" value="Protein kinase-like (PK-like)"/>
    <property type="match status" value="1"/>
</dbReference>
<dbReference type="PROSITE" id="PS50011">
    <property type="entry name" value="PROTEIN_KINASE_DOM"/>
    <property type="match status" value="1"/>
</dbReference>
<dbReference type="PROSITE" id="PS00108">
    <property type="entry name" value="PROTEIN_KINASE_ST"/>
    <property type="match status" value="1"/>
</dbReference>
<organism>
    <name type="scientific">Arabidopsis thaliana</name>
    <name type="common">Mouse-ear cress</name>
    <dbReference type="NCBI Taxonomy" id="3702"/>
    <lineage>
        <taxon>Eukaryota</taxon>
        <taxon>Viridiplantae</taxon>
        <taxon>Streptophyta</taxon>
        <taxon>Embryophyta</taxon>
        <taxon>Tracheophyta</taxon>
        <taxon>Spermatophyta</taxon>
        <taxon>Magnoliopsida</taxon>
        <taxon>eudicotyledons</taxon>
        <taxon>Gunneridae</taxon>
        <taxon>Pentapetalae</taxon>
        <taxon>rosids</taxon>
        <taxon>malvids</taxon>
        <taxon>Brassicales</taxon>
        <taxon>Brassicaceae</taxon>
        <taxon>Camelineae</taxon>
        <taxon>Arabidopsis</taxon>
    </lineage>
</organism>